<gene>
    <name evidence="5" type="primary">nas-10</name>
    <name evidence="5" type="ORF">K09C8.3</name>
</gene>
<sequence>MLSSKLFCVLFFCLGLSNGWPQFDFMNQMGFGGGFNNGPHPNSRPGSRPNSPLGDIFGNINGMVKGITDQIGKIAQGLDVNNDLGKMAHGPPPPQSEWVEHARRFCRRFPGHPKCRGQLPQFNDIGSMLNGILVDSGKWLPKVPFINIRDPLSGINSDLKNALNGIQVQFGQISQQFANNIRNICQQMNCKQQQQKNVQMKQAILKQTVDFEKKVFGNNVADKMNLRFDRTLQLKQALLEKAQLKGVVAPEDNGVFDKDLLLTETQANFMLNELGKGGEGAIPMPGSAKAKRASIFFEQNLIQKWPSTSPIPYTFDSSLDNLDQNDVRGAISEIEQKTCIRFKYFASPPKGNHINYQKVNSPSFCGLSYIGRVEPANPVYLSFQCGNGRGIAVHETMHALGVNHQHLRMDRDKHIKVDWSNINPQQYDAFVVADSKLYTTYGVKYAYDSIMHYNAYTGAVNIAKPTMIPLVNQQANIGLLGQRAKMSNADVEILNKMYCKSAGCDDKNVYCGAWALQDLCNNPNHNVWMRSNCRKSCNFC</sequence>
<keyword id="KW-1015">Disulfide bond</keyword>
<keyword id="KW-0378">Hydrolase</keyword>
<keyword id="KW-0479">Metal-binding</keyword>
<keyword id="KW-0482">Metalloprotease</keyword>
<keyword id="KW-0645">Protease</keyword>
<keyword id="KW-1185">Reference proteome</keyword>
<keyword id="KW-0862">Zinc</keyword>
<keyword id="KW-0865">Zymogen</keyword>
<name>NAS10_CAEEL</name>
<proteinExistence type="inferred from homology"/>
<reference key="1">
    <citation type="journal article" date="1998" name="Science">
        <title>Genome sequence of the nematode C. elegans: a platform for investigating biology.</title>
        <authorList>
            <consortium name="The C. elegans sequencing consortium"/>
        </authorList>
    </citation>
    <scope>NUCLEOTIDE SEQUENCE [LARGE SCALE GENOMIC DNA]</scope>
    <source>
        <strain>Bristol N2</strain>
    </source>
</reference>
<reference key="2">
    <citation type="journal article" date="2003" name="Eur. J. Biochem.">
        <title>The astacin protein family in Caenorhabditis elegans.</title>
        <authorList>
            <person name="Moehrlen F."/>
            <person name="Hutter H."/>
            <person name="Zwilling R."/>
        </authorList>
    </citation>
    <scope>NOMENCLATURE</scope>
</reference>
<protein>
    <recommendedName>
        <fullName>Zinc metalloproteinase nas-10</fullName>
        <ecNumber evidence="1">3.4.24.-</ecNumber>
    </recommendedName>
    <alternativeName>
        <fullName>Nematode astacin 10</fullName>
    </alternativeName>
</protein>
<dbReference type="EC" id="3.4.24.-" evidence="1"/>
<dbReference type="EMBL" id="BX284606">
    <property type="protein sequence ID" value="CAR81375.1"/>
    <property type="molecule type" value="Genomic_DNA"/>
</dbReference>
<dbReference type="PIR" id="T23540">
    <property type="entry name" value="T23540"/>
</dbReference>
<dbReference type="RefSeq" id="NP_001257126.1">
    <property type="nucleotide sequence ID" value="NM_001270197.4"/>
</dbReference>
<dbReference type="SMR" id="Q21388"/>
<dbReference type="FunCoup" id="Q21388">
    <property type="interactions" value="295"/>
</dbReference>
<dbReference type="STRING" id="6239.K09C8.3a.1"/>
<dbReference type="MEROPS" id="M12.A35"/>
<dbReference type="PaxDb" id="6239-K09C8.3a"/>
<dbReference type="EnsemblMetazoa" id="K09C8.3.1">
    <property type="protein sequence ID" value="K09C8.3.1"/>
    <property type="gene ID" value="WBGene00003529"/>
</dbReference>
<dbReference type="GeneID" id="181287"/>
<dbReference type="KEGG" id="cel:CELE_K09C8.3"/>
<dbReference type="UCSC" id="K09C8.3">
    <property type="organism name" value="c. elegans"/>
</dbReference>
<dbReference type="AGR" id="WB:WBGene00003529"/>
<dbReference type="CTD" id="181287"/>
<dbReference type="WormBase" id="K09C8.3">
    <property type="protein sequence ID" value="CE43056"/>
    <property type="gene ID" value="WBGene00003529"/>
    <property type="gene designation" value="nas-10"/>
</dbReference>
<dbReference type="eggNOG" id="KOG3714">
    <property type="taxonomic scope" value="Eukaryota"/>
</dbReference>
<dbReference type="GeneTree" id="ENSGT00970000196429"/>
<dbReference type="HOGENOM" id="CLU_030134_0_0_1"/>
<dbReference type="InParanoid" id="Q21388"/>
<dbReference type="OrthoDB" id="291007at2759"/>
<dbReference type="PhylomeDB" id="Q21388"/>
<dbReference type="PRO" id="PR:Q21388"/>
<dbReference type="Proteomes" id="UP000001940">
    <property type="component" value="Chromosome X"/>
</dbReference>
<dbReference type="GO" id="GO:0004222">
    <property type="term" value="F:metalloendopeptidase activity"/>
    <property type="evidence" value="ECO:0000318"/>
    <property type="project" value="GO_Central"/>
</dbReference>
<dbReference type="GO" id="GO:0008270">
    <property type="term" value="F:zinc ion binding"/>
    <property type="evidence" value="ECO:0007669"/>
    <property type="project" value="InterPro"/>
</dbReference>
<dbReference type="GO" id="GO:0006508">
    <property type="term" value="P:proteolysis"/>
    <property type="evidence" value="ECO:0007669"/>
    <property type="project" value="UniProtKB-KW"/>
</dbReference>
<dbReference type="CDD" id="cd04280">
    <property type="entry name" value="ZnMc_astacin_like"/>
    <property type="match status" value="1"/>
</dbReference>
<dbReference type="FunFam" id="1.10.10.1870:FF:000001">
    <property type="entry name" value="Metalloendopeptidase"/>
    <property type="match status" value="1"/>
</dbReference>
<dbReference type="FunFam" id="1.10.10.1940:FF:000004">
    <property type="entry name" value="Metalloendopeptidase"/>
    <property type="match status" value="1"/>
</dbReference>
<dbReference type="FunFam" id="3.40.390.10:FF:000050">
    <property type="entry name" value="Metalloendopeptidase"/>
    <property type="match status" value="1"/>
</dbReference>
<dbReference type="Gene3D" id="3.40.390.10">
    <property type="entry name" value="Collagenase (Catalytic Domain)"/>
    <property type="match status" value="1"/>
</dbReference>
<dbReference type="Gene3D" id="1.10.10.1870">
    <property type="entry name" value="ShTK domain-like"/>
    <property type="match status" value="1"/>
</dbReference>
<dbReference type="InterPro" id="IPR034035">
    <property type="entry name" value="Astacin-like_dom"/>
</dbReference>
<dbReference type="InterPro" id="IPR024079">
    <property type="entry name" value="MetalloPept_cat_dom_sf"/>
</dbReference>
<dbReference type="InterPro" id="IPR001506">
    <property type="entry name" value="Peptidase_M12A"/>
</dbReference>
<dbReference type="InterPro" id="IPR017368">
    <property type="entry name" value="Peptidase_M12A_astacin-9/10/11"/>
</dbReference>
<dbReference type="InterPro" id="IPR006026">
    <property type="entry name" value="Peptidase_Metallo"/>
</dbReference>
<dbReference type="InterPro" id="IPR003582">
    <property type="entry name" value="ShKT_dom"/>
</dbReference>
<dbReference type="PANTHER" id="PTHR10127">
    <property type="entry name" value="DISCOIDIN, CUB, EGF, LAMININ , AND ZINC METALLOPROTEASE DOMAIN CONTAINING"/>
    <property type="match status" value="1"/>
</dbReference>
<dbReference type="PANTHER" id="PTHR10127:SF802">
    <property type="entry name" value="ZINC METALLOPROTEINASE NAS-10"/>
    <property type="match status" value="1"/>
</dbReference>
<dbReference type="Pfam" id="PF01400">
    <property type="entry name" value="Astacin"/>
    <property type="match status" value="1"/>
</dbReference>
<dbReference type="Pfam" id="PF01549">
    <property type="entry name" value="ShK"/>
    <property type="match status" value="1"/>
</dbReference>
<dbReference type="PIRSF" id="PIRSF038055">
    <property type="entry name" value="Nas9/Nas10/Nas11"/>
    <property type="match status" value="1"/>
</dbReference>
<dbReference type="PRINTS" id="PR00480">
    <property type="entry name" value="ASTACIN"/>
</dbReference>
<dbReference type="SMART" id="SM00254">
    <property type="entry name" value="ShKT"/>
    <property type="match status" value="1"/>
</dbReference>
<dbReference type="SMART" id="SM00235">
    <property type="entry name" value="ZnMc"/>
    <property type="match status" value="1"/>
</dbReference>
<dbReference type="SUPFAM" id="SSF55486">
    <property type="entry name" value="Metalloproteases ('zincins'), catalytic domain"/>
    <property type="match status" value="1"/>
</dbReference>
<dbReference type="PROSITE" id="PS51864">
    <property type="entry name" value="ASTACIN"/>
    <property type="match status" value="1"/>
</dbReference>
<dbReference type="PROSITE" id="PS51670">
    <property type="entry name" value="SHKT"/>
    <property type="match status" value="1"/>
</dbReference>
<feature type="propeptide" id="PRO_0000442657" evidence="4">
    <location>
        <begin position="1"/>
        <end status="unknown"/>
    </location>
</feature>
<feature type="chain" id="PRO_0000078185" description="Zinc metalloproteinase nas-10">
    <location>
        <begin status="unknown"/>
        <end position="540"/>
    </location>
</feature>
<feature type="domain" description="Peptidase M12A" evidence="3">
    <location>
        <begin position="293"/>
        <end position="500"/>
    </location>
</feature>
<feature type="domain" description="ShKT" evidence="2">
    <location>
        <begin position="504"/>
        <end position="540"/>
    </location>
</feature>
<feature type="active site" evidence="3">
    <location>
        <position position="395"/>
    </location>
</feature>
<feature type="binding site" evidence="3">
    <location>
        <position position="394"/>
    </location>
    <ligand>
        <name>Zn(2+)</name>
        <dbReference type="ChEBI" id="CHEBI:29105"/>
        <note>catalytic</note>
    </ligand>
</feature>
<feature type="binding site" evidence="3">
    <location>
        <position position="398"/>
    </location>
    <ligand>
        <name>Zn(2+)</name>
        <dbReference type="ChEBI" id="CHEBI:29105"/>
        <note>catalytic</note>
    </ligand>
</feature>
<feature type="binding site" evidence="3">
    <location>
        <position position="404"/>
    </location>
    <ligand>
        <name>Zn(2+)</name>
        <dbReference type="ChEBI" id="CHEBI:29105"/>
        <note>catalytic</note>
    </ligand>
</feature>
<feature type="disulfide bond" evidence="3">
    <location>
        <begin position="339"/>
        <end position="499"/>
    </location>
</feature>
<feature type="disulfide bond" evidence="3">
    <location>
        <begin position="365"/>
        <end position="385"/>
    </location>
</feature>
<feature type="disulfide bond" evidence="2">
    <location>
        <begin position="504"/>
        <end position="540"/>
    </location>
</feature>
<feature type="disulfide bond" evidence="2">
    <location>
        <begin position="511"/>
        <end position="533"/>
    </location>
</feature>
<feature type="disulfide bond" evidence="2">
    <location>
        <begin position="520"/>
        <end position="537"/>
    </location>
</feature>
<accession>Q21388</accession>
<accession>B6EU59</accession>
<organism>
    <name type="scientific">Caenorhabditis elegans</name>
    <dbReference type="NCBI Taxonomy" id="6239"/>
    <lineage>
        <taxon>Eukaryota</taxon>
        <taxon>Metazoa</taxon>
        <taxon>Ecdysozoa</taxon>
        <taxon>Nematoda</taxon>
        <taxon>Chromadorea</taxon>
        <taxon>Rhabditida</taxon>
        <taxon>Rhabditina</taxon>
        <taxon>Rhabditomorpha</taxon>
        <taxon>Rhabditoidea</taxon>
        <taxon>Rhabditidae</taxon>
        <taxon>Peloderinae</taxon>
        <taxon>Caenorhabditis</taxon>
    </lineage>
</organism>
<comment type="function">
    <text evidence="1">Metalloprotease.</text>
</comment>
<comment type="cofactor">
    <cofactor evidence="3">
        <name>Zn(2+)</name>
        <dbReference type="ChEBI" id="CHEBI:29105"/>
    </cofactor>
    <text evidence="3">Binds 1 zinc ion per subunit.</text>
</comment>
<evidence type="ECO:0000250" key="1">
    <source>
        <dbReference type="UniProtKB" id="A8Q2D1"/>
    </source>
</evidence>
<evidence type="ECO:0000255" key="2">
    <source>
        <dbReference type="PROSITE-ProRule" id="PRU01005"/>
    </source>
</evidence>
<evidence type="ECO:0000255" key="3">
    <source>
        <dbReference type="PROSITE-ProRule" id="PRU01211"/>
    </source>
</evidence>
<evidence type="ECO:0000305" key="4"/>
<evidence type="ECO:0000312" key="5">
    <source>
        <dbReference type="WormBase" id="K09C8.3"/>
    </source>
</evidence>